<protein>
    <recommendedName>
        <fullName>Leu/Ile/Val-binding protein homolog 8</fullName>
    </recommendedName>
</protein>
<name>LIVB8_BRUA2</name>
<dbReference type="EMBL" id="AM040265">
    <property type="protein sequence ID" value="CAJ12996.1"/>
    <property type="molecule type" value="Genomic_DNA"/>
</dbReference>
<dbReference type="RefSeq" id="WP_002966215.1">
    <property type="nucleotide sequence ID" value="NZ_KN046823.1"/>
</dbReference>
<dbReference type="SMR" id="Q2YK50"/>
<dbReference type="STRING" id="359391.BAB2_0830"/>
<dbReference type="KEGG" id="bmf:BAB2_0830"/>
<dbReference type="PATRIC" id="fig|359391.11.peg.521"/>
<dbReference type="HOGENOM" id="CLU_027128_4_0_5"/>
<dbReference type="PhylomeDB" id="Q2YK50"/>
<dbReference type="PHI-base" id="PHI:9132"/>
<dbReference type="Proteomes" id="UP000002719">
    <property type="component" value="Chromosome II"/>
</dbReference>
<dbReference type="GO" id="GO:0006865">
    <property type="term" value="P:amino acid transport"/>
    <property type="evidence" value="ECO:0007669"/>
    <property type="project" value="UniProtKB-KW"/>
</dbReference>
<dbReference type="CDD" id="cd06340">
    <property type="entry name" value="PBP1_ABC_ligand_binding-like"/>
    <property type="match status" value="1"/>
</dbReference>
<dbReference type="Gene3D" id="3.40.50.2300">
    <property type="match status" value="2"/>
</dbReference>
<dbReference type="InterPro" id="IPR051010">
    <property type="entry name" value="BCAA_transport"/>
</dbReference>
<dbReference type="InterPro" id="IPR028081">
    <property type="entry name" value="Leu-bd"/>
</dbReference>
<dbReference type="InterPro" id="IPR000709">
    <property type="entry name" value="Leu_Ile_Val-bd"/>
</dbReference>
<dbReference type="InterPro" id="IPR028082">
    <property type="entry name" value="Peripla_BP_I"/>
</dbReference>
<dbReference type="PANTHER" id="PTHR30483:SF37">
    <property type="entry name" value="ABC TRANSPORTER SUBSTRATE-BINDING PROTEIN"/>
    <property type="match status" value="1"/>
</dbReference>
<dbReference type="PANTHER" id="PTHR30483">
    <property type="entry name" value="LEUCINE-SPECIFIC-BINDING PROTEIN"/>
    <property type="match status" value="1"/>
</dbReference>
<dbReference type="Pfam" id="PF13458">
    <property type="entry name" value="Peripla_BP_6"/>
    <property type="match status" value="1"/>
</dbReference>
<dbReference type="PRINTS" id="PR00337">
    <property type="entry name" value="LEUILEVALBP"/>
</dbReference>
<dbReference type="SUPFAM" id="SSF53822">
    <property type="entry name" value="Periplasmic binding protein-like I"/>
    <property type="match status" value="1"/>
</dbReference>
<proteinExistence type="inferred from homology"/>
<organism>
    <name type="scientific">Brucella abortus (strain 2308)</name>
    <dbReference type="NCBI Taxonomy" id="359391"/>
    <lineage>
        <taxon>Bacteria</taxon>
        <taxon>Pseudomonadati</taxon>
        <taxon>Pseudomonadota</taxon>
        <taxon>Alphaproteobacteria</taxon>
        <taxon>Hyphomicrobiales</taxon>
        <taxon>Brucellaceae</taxon>
        <taxon>Brucella/Ochrobactrum group</taxon>
        <taxon>Brucella</taxon>
    </lineage>
</organism>
<sequence length="403" mass="42457">MRLSRLLIGASLGVALSSTVFTAALADVKFGSLYPISGSLALLGEESARGLELAVDEVNAAGGIKGEKVVLERGDAVDNNQATGEARRLISLVGVKAIFGTYSSARVIAASQVSELAGIPYFEMGAVADEVTGRGLQYLFRTNPTAENMAKDSVDMLIKGIAPGLGKDPKDMKIGIIYEDSSYGTSVAGHQEDNAKAAGLTVVLKSGYPSNTVDMSSLVLELREKGADVVMQTSYQNDSVLFLQQANEAGYKPLAIIGGGGGYSMQPTADAVGHDLIDGVFDADYTQYAVNTSATPGLTEFVEAYKAKYGSQPRSGHSLTNYVGAKAIFQALNAGEGFEPDQIVSAVKALDIPDGQTAAGYGVKFGKNNQNERATMMGMQWQDGKLVTVYPENAAIAKMRFKK</sequence>
<accession>Q2YK50</accession>
<evidence type="ECO:0000255" key="1"/>
<evidence type="ECO:0000305" key="2"/>
<feature type="signal peptide" evidence="1">
    <location>
        <begin position="1"/>
        <end position="26"/>
    </location>
</feature>
<feature type="chain" id="PRO_0000285746" description="Leu/Ile/Val-binding protein homolog 8">
    <location>
        <begin position="27"/>
        <end position="403"/>
    </location>
</feature>
<gene>
    <name type="ordered locus">BAB2_0830</name>
</gene>
<reference key="1">
    <citation type="journal article" date="2005" name="Infect. Immun.">
        <title>Whole-genome analyses of speciation events in pathogenic Brucellae.</title>
        <authorList>
            <person name="Chain P.S."/>
            <person name="Comerci D.J."/>
            <person name="Tolmasky M.E."/>
            <person name="Larimer F.W."/>
            <person name="Malfatti S.A."/>
            <person name="Vergez L.M."/>
            <person name="Aguero F."/>
            <person name="Land M.L."/>
            <person name="Ugalde R.A."/>
            <person name="Garcia E."/>
        </authorList>
    </citation>
    <scope>NUCLEOTIDE SEQUENCE [LARGE SCALE GENOMIC DNA]</scope>
    <source>
        <strain>2308</strain>
    </source>
</reference>
<comment type="function">
    <text evidence="2">Component of an amino-acid transport system.</text>
</comment>
<comment type="similarity">
    <text evidence="2">Belongs to the leucine-binding protein family.</text>
</comment>
<keyword id="KW-0029">Amino-acid transport</keyword>
<keyword id="KW-1185">Reference proteome</keyword>
<keyword id="KW-0732">Signal</keyword>
<keyword id="KW-0813">Transport</keyword>